<keyword id="KW-0028">Amino-acid biosynthesis</keyword>
<keyword id="KW-0057">Aromatic amino acid biosynthesis</keyword>
<keyword id="KW-0456">Lyase</keyword>
<keyword id="KW-0663">Pyridoxal phosphate</keyword>
<keyword id="KW-1185">Reference proteome</keyword>
<keyword id="KW-0822">Tryptophan biosynthesis</keyword>
<dbReference type="EC" id="4.2.1.20" evidence="1"/>
<dbReference type="EMBL" id="CP000023">
    <property type="protein sequence ID" value="AAV61191.1"/>
    <property type="molecule type" value="Genomic_DNA"/>
</dbReference>
<dbReference type="RefSeq" id="WP_011226421.1">
    <property type="nucleotide sequence ID" value="NC_006448.1"/>
</dbReference>
<dbReference type="SMR" id="Q5M350"/>
<dbReference type="STRING" id="264199.stu1588"/>
<dbReference type="GeneID" id="66899334"/>
<dbReference type="KEGG" id="stl:stu1588"/>
<dbReference type="PATRIC" id="fig|264199.4.peg.1560"/>
<dbReference type="eggNOG" id="COG0133">
    <property type="taxonomic scope" value="Bacteria"/>
</dbReference>
<dbReference type="HOGENOM" id="CLU_016734_3_1_9"/>
<dbReference type="UniPathway" id="UPA00035">
    <property type="reaction ID" value="UER00044"/>
</dbReference>
<dbReference type="Proteomes" id="UP000001170">
    <property type="component" value="Chromosome"/>
</dbReference>
<dbReference type="GO" id="GO:0005737">
    <property type="term" value="C:cytoplasm"/>
    <property type="evidence" value="ECO:0007669"/>
    <property type="project" value="TreeGrafter"/>
</dbReference>
<dbReference type="GO" id="GO:0004834">
    <property type="term" value="F:tryptophan synthase activity"/>
    <property type="evidence" value="ECO:0007669"/>
    <property type="project" value="UniProtKB-UniRule"/>
</dbReference>
<dbReference type="CDD" id="cd06446">
    <property type="entry name" value="Trp-synth_B"/>
    <property type="match status" value="1"/>
</dbReference>
<dbReference type="FunFam" id="3.40.50.1100:FF:000001">
    <property type="entry name" value="Tryptophan synthase beta chain"/>
    <property type="match status" value="1"/>
</dbReference>
<dbReference type="FunFam" id="3.40.50.1100:FF:000004">
    <property type="entry name" value="Tryptophan synthase beta chain"/>
    <property type="match status" value="1"/>
</dbReference>
<dbReference type="Gene3D" id="3.40.50.1100">
    <property type="match status" value="2"/>
</dbReference>
<dbReference type="HAMAP" id="MF_00133">
    <property type="entry name" value="Trp_synth_beta"/>
    <property type="match status" value="1"/>
</dbReference>
<dbReference type="InterPro" id="IPR006653">
    <property type="entry name" value="Trp_synth_b_CS"/>
</dbReference>
<dbReference type="InterPro" id="IPR006654">
    <property type="entry name" value="Trp_synth_beta"/>
</dbReference>
<dbReference type="InterPro" id="IPR023026">
    <property type="entry name" value="Trp_synth_beta/beta-like"/>
</dbReference>
<dbReference type="InterPro" id="IPR001926">
    <property type="entry name" value="TrpB-like_PALP"/>
</dbReference>
<dbReference type="InterPro" id="IPR036052">
    <property type="entry name" value="TrpB-like_PALP_sf"/>
</dbReference>
<dbReference type="NCBIfam" id="TIGR00263">
    <property type="entry name" value="trpB"/>
    <property type="match status" value="1"/>
</dbReference>
<dbReference type="PANTHER" id="PTHR48077:SF3">
    <property type="entry name" value="TRYPTOPHAN SYNTHASE"/>
    <property type="match status" value="1"/>
</dbReference>
<dbReference type="PANTHER" id="PTHR48077">
    <property type="entry name" value="TRYPTOPHAN SYNTHASE-RELATED"/>
    <property type="match status" value="1"/>
</dbReference>
<dbReference type="Pfam" id="PF00291">
    <property type="entry name" value="PALP"/>
    <property type="match status" value="1"/>
</dbReference>
<dbReference type="PIRSF" id="PIRSF001413">
    <property type="entry name" value="Trp_syn_beta"/>
    <property type="match status" value="1"/>
</dbReference>
<dbReference type="SUPFAM" id="SSF53686">
    <property type="entry name" value="Tryptophan synthase beta subunit-like PLP-dependent enzymes"/>
    <property type="match status" value="1"/>
</dbReference>
<dbReference type="PROSITE" id="PS00168">
    <property type="entry name" value="TRP_SYNTHASE_BETA"/>
    <property type="match status" value="1"/>
</dbReference>
<feature type="chain" id="PRO_1000018411" description="Tryptophan synthase beta chain">
    <location>
        <begin position="1"/>
        <end position="402"/>
    </location>
</feature>
<feature type="modified residue" description="N6-(pyridoxal phosphate)lysine" evidence="1">
    <location>
        <position position="91"/>
    </location>
</feature>
<name>TRPB_STRT2</name>
<reference key="1">
    <citation type="journal article" date="2004" name="Nat. Biotechnol.">
        <title>Complete sequence and comparative genome analysis of the dairy bacterium Streptococcus thermophilus.</title>
        <authorList>
            <person name="Bolotin A."/>
            <person name="Quinquis B."/>
            <person name="Renault P."/>
            <person name="Sorokin A."/>
            <person name="Ehrlich S.D."/>
            <person name="Kulakauskas S."/>
            <person name="Lapidus A."/>
            <person name="Goltsman E."/>
            <person name="Mazur M."/>
            <person name="Pusch G.D."/>
            <person name="Fonstein M."/>
            <person name="Overbeek R."/>
            <person name="Kyprides N."/>
            <person name="Purnelle B."/>
            <person name="Prozzi D."/>
            <person name="Ngui K."/>
            <person name="Masuy D."/>
            <person name="Hancy F."/>
            <person name="Burteau S."/>
            <person name="Boutry M."/>
            <person name="Delcour J."/>
            <person name="Goffeau A."/>
            <person name="Hols P."/>
        </authorList>
    </citation>
    <scope>NUCLEOTIDE SEQUENCE [LARGE SCALE GENOMIC DNA]</scope>
    <source>
        <strain>ATCC BAA-250 / LMG 18311</strain>
    </source>
</reference>
<evidence type="ECO:0000255" key="1">
    <source>
        <dbReference type="HAMAP-Rule" id="MF_00133"/>
    </source>
</evidence>
<protein>
    <recommendedName>
        <fullName evidence="1">Tryptophan synthase beta chain</fullName>
        <ecNumber evidence="1">4.2.1.20</ecNumber>
    </recommendedName>
</protein>
<proteinExistence type="inferred from homology"/>
<gene>
    <name evidence="1" type="primary">trpB</name>
    <name type="ordered locus">stu1588</name>
</gene>
<accession>Q5M350</accession>
<comment type="function">
    <text evidence="1">The beta subunit is responsible for the synthesis of L-tryptophan from indole and L-serine.</text>
</comment>
<comment type="catalytic activity">
    <reaction evidence="1">
        <text>(1S,2R)-1-C-(indol-3-yl)glycerol 3-phosphate + L-serine = D-glyceraldehyde 3-phosphate + L-tryptophan + H2O</text>
        <dbReference type="Rhea" id="RHEA:10532"/>
        <dbReference type="ChEBI" id="CHEBI:15377"/>
        <dbReference type="ChEBI" id="CHEBI:33384"/>
        <dbReference type="ChEBI" id="CHEBI:57912"/>
        <dbReference type="ChEBI" id="CHEBI:58866"/>
        <dbReference type="ChEBI" id="CHEBI:59776"/>
        <dbReference type="EC" id="4.2.1.20"/>
    </reaction>
</comment>
<comment type="cofactor">
    <cofactor evidence="1">
        <name>pyridoxal 5'-phosphate</name>
        <dbReference type="ChEBI" id="CHEBI:597326"/>
    </cofactor>
</comment>
<comment type="pathway">
    <text evidence="1">Amino-acid biosynthesis; L-tryptophan biosynthesis; L-tryptophan from chorismate: step 5/5.</text>
</comment>
<comment type="subunit">
    <text evidence="1">Tetramer of two alpha and two beta chains.</text>
</comment>
<comment type="similarity">
    <text evidence="1">Belongs to the TrpB family.</text>
</comment>
<organism>
    <name type="scientific">Streptococcus thermophilus (strain ATCC BAA-250 / LMG 18311)</name>
    <dbReference type="NCBI Taxonomy" id="264199"/>
    <lineage>
        <taxon>Bacteria</taxon>
        <taxon>Bacillati</taxon>
        <taxon>Bacillota</taxon>
        <taxon>Bacilli</taxon>
        <taxon>Lactobacillales</taxon>
        <taxon>Streptococcaceae</taxon>
        <taxon>Streptococcus</taxon>
    </lineage>
</organism>
<sequence length="402" mass="43413">MTYQQPDAKGFYGKFGGQFVPETLMTAVIELDKAYREAKEDSSFQAELDDLLKNYVGRETPLYHAKRLTDHIGGAQIYLKREDLNHTGAHKINNALGQVLLAKRMGKKKIIAETGAGQHGVATATAAALFDMDCTIYVGEEDVKRQALNVFRMELLGAKVFSVTDGSRVLKDAVNAALRAWVAGIEDTHYIMGSALGPAPFPEIVRDFQSVIGREAKRQYAEISGGKLPDAVMACIGGGSNAIGMFYPFVNDKSVAMYGAEASGLGLDTEKHAATFAKGRPGILHGALMDVLQDAHGQIMEAFSISAGLDYPGVGPEHCYFNEIGRATYDSITDEEALEGFKLLSRLEGIIPALESSHAIALAQKVAAKMSPDQSLIVCLSGRGDKDVMQVKERFEAEAEGK</sequence>